<proteinExistence type="predicted"/>
<gene>
    <name type="ordered locus">BB_D24</name>
    <name type="ORF">CdsO</name>
</gene>
<comment type="subcellular location">
    <subcellularLocation>
        <location evidence="2">Cell membrane</location>
        <topology evidence="2">Multi-pass membrane protein</topology>
    </subcellularLocation>
</comment>
<name>Y2824_BORBU</name>
<reference key="1">
    <citation type="journal article" date="1996" name="J. Bacteriol.">
        <title>The nucleotide sequence of a linear plasmid of Borrelia burgdorferi reveals similarities to those of circular plasmids of other prokaryotes.</title>
        <authorList>
            <person name="Barbour A.G."/>
            <person name="Carter C.J."/>
            <person name="Bundoc V."/>
            <person name="Hinnebusch J."/>
        </authorList>
    </citation>
    <scope>NUCLEOTIDE SEQUENCE [GENOMIC DNA]</scope>
    <source>
        <strain>ATCC 35210 / DSM 4680 / CIP 102532 / B31</strain>
    </source>
</reference>
<reference key="2">
    <citation type="journal article" date="1997" name="Nature">
        <title>Genomic sequence of a Lyme disease spirochaete, Borrelia burgdorferi.</title>
        <authorList>
            <person name="Fraser C.M."/>
            <person name="Casjens S."/>
            <person name="Huang W.M."/>
            <person name="Sutton G.G."/>
            <person name="Clayton R.A."/>
            <person name="Lathigra R."/>
            <person name="White O."/>
            <person name="Ketchum K.A."/>
            <person name="Dodson R.J."/>
            <person name="Hickey E.K."/>
            <person name="Gwinn M.L."/>
            <person name="Dougherty B.A."/>
            <person name="Tomb J.-F."/>
            <person name="Fleischmann R.D."/>
            <person name="Richardson D.L."/>
            <person name="Peterson J.D."/>
            <person name="Kerlavage A.R."/>
            <person name="Quackenbush J."/>
            <person name="Salzberg S.L."/>
            <person name="Hanson M."/>
            <person name="van Vugt R."/>
            <person name="Palmer N."/>
            <person name="Adams M.D."/>
            <person name="Gocayne J.D."/>
            <person name="Weidman J.F."/>
            <person name="Utterback T.R."/>
            <person name="Watthey L."/>
            <person name="McDonald L.A."/>
            <person name="Artiach P."/>
            <person name="Bowman C."/>
            <person name="Garland S.A."/>
            <person name="Fujii C."/>
            <person name="Cotton M.D."/>
            <person name="Horst K."/>
            <person name="Roberts K.M."/>
            <person name="Hatch B."/>
            <person name="Smith H.O."/>
            <person name="Venter J.C."/>
        </authorList>
    </citation>
    <scope>NUCLEOTIDE SEQUENCE [LARGE SCALE GENOMIC DNA]</scope>
    <source>
        <strain>ATCC 35210 / DSM 4680 / CIP 102532 / B31</strain>
    </source>
</reference>
<accession>P70845</accession>
<keyword id="KW-1003">Cell membrane</keyword>
<keyword id="KW-0472">Membrane</keyword>
<keyword id="KW-0614">Plasmid</keyword>
<keyword id="KW-1185">Reference proteome</keyword>
<keyword id="KW-0812">Transmembrane</keyword>
<keyword id="KW-1133">Transmembrane helix</keyword>
<evidence type="ECO:0000255" key="1"/>
<evidence type="ECO:0000305" key="2"/>
<protein>
    <recommendedName>
        <fullName>Uncharacterized protein BBD24</fullName>
    </recommendedName>
</protein>
<organism>
    <name type="scientific">Borreliella burgdorferi (strain ATCC 35210 / DSM 4680 / CIP 102532 / B31)</name>
    <name type="common">Borrelia burgdorferi</name>
    <dbReference type="NCBI Taxonomy" id="224326"/>
    <lineage>
        <taxon>Bacteria</taxon>
        <taxon>Pseudomonadati</taxon>
        <taxon>Spirochaetota</taxon>
        <taxon>Spirochaetia</taxon>
        <taxon>Spirochaetales</taxon>
        <taxon>Borreliaceae</taxon>
        <taxon>Borreliella</taxon>
    </lineage>
</organism>
<dbReference type="EMBL" id="U43414">
    <property type="protein sequence ID" value="AAB38563.1"/>
    <property type="molecule type" value="Genomic_DNA"/>
</dbReference>
<dbReference type="EMBL" id="AE000793">
    <property type="protein sequence ID" value="AAC66355.1"/>
    <property type="molecule type" value="Genomic_DNA"/>
</dbReference>
<dbReference type="PIR" id="B70224">
    <property type="entry name" value="B70224"/>
</dbReference>
<dbReference type="RefSeq" id="NP_045406.1">
    <property type="nucleotide sequence ID" value="NC_001849.2"/>
</dbReference>
<dbReference type="RefSeq" id="NP_862716.1">
    <property type="nucleotide sequence ID" value="NC_004988.1"/>
</dbReference>
<dbReference type="SMR" id="P70845"/>
<dbReference type="EnsemblBacteria" id="AAC66355">
    <property type="protein sequence ID" value="AAC66355"/>
    <property type="gene ID" value="BB_D24"/>
</dbReference>
<dbReference type="KEGG" id="bbu:BB_D24"/>
<dbReference type="HOGENOM" id="CLU_2567058_0_0_12"/>
<dbReference type="OrthoDB" id="352889at2"/>
<dbReference type="PRO" id="PR:P70845"/>
<dbReference type="Proteomes" id="UP000001807">
    <property type="component" value="Plasmid lp17"/>
</dbReference>
<dbReference type="GO" id="GO:0005886">
    <property type="term" value="C:plasma membrane"/>
    <property type="evidence" value="ECO:0007669"/>
    <property type="project" value="UniProtKB-SubCell"/>
</dbReference>
<geneLocation type="plasmid">
    <name>lp17 (linear 17 kb)</name>
    <name>lp16</name>
</geneLocation>
<sequence>MTAIIVYSCLTMCVIYFHLQLKTFFTKLIRFCKKCFDIFLLLIEMLKLIFYLLIINNKFYIFIIISIALITINTMI</sequence>
<feature type="chain" id="PRO_0000174428" description="Uncharacterized protein BBD24">
    <location>
        <begin position="1"/>
        <end position="76"/>
    </location>
</feature>
<feature type="transmembrane region" description="Helical" evidence="1">
    <location>
        <begin position="1"/>
        <end position="21"/>
    </location>
</feature>
<feature type="transmembrane region" description="Helical" evidence="1">
    <location>
        <begin position="35"/>
        <end position="55"/>
    </location>
</feature>
<feature type="transmembrane region" description="Helical" evidence="1">
    <location>
        <begin position="56"/>
        <end position="76"/>
    </location>
</feature>